<dbReference type="EMBL" id="AY261360">
    <property type="status" value="NOT_ANNOTATED_CDS"/>
    <property type="molecule type" value="Genomic_DNA"/>
</dbReference>
<dbReference type="Proteomes" id="UP000000861">
    <property type="component" value="Segment"/>
</dbReference>
<dbReference type="GO" id="GO:0020002">
    <property type="term" value="C:host cell plasma membrane"/>
    <property type="evidence" value="ECO:0007669"/>
    <property type="project" value="UniProtKB-SubCell"/>
</dbReference>
<dbReference type="GO" id="GO:0016020">
    <property type="term" value="C:membrane"/>
    <property type="evidence" value="ECO:0007669"/>
    <property type="project" value="UniProtKB-KW"/>
</dbReference>
<dbReference type="GO" id="GO:0055036">
    <property type="term" value="C:virion membrane"/>
    <property type="evidence" value="ECO:0007669"/>
    <property type="project" value="UniProtKB-SubCell"/>
</dbReference>
<gene>
    <name type="ordered locus">Ken-165</name>
</gene>
<keyword id="KW-0244">Early protein</keyword>
<keyword id="KW-1032">Host cell membrane</keyword>
<keyword id="KW-1043">Host membrane</keyword>
<keyword id="KW-0472">Membrane</keyword>
<keyword id="KW-0812">Transmembrane</keyword>
<keyword id="KW-1133">Transmembrane helix</keyword>
<keyword id="KW-0946">Virion</keyword>
<organism>
    <name type="scientific">African swine fever virus (isolate Pig/Kenya/KEN-50/1950)</name>
    <name type="common">ASFV</name>
    <dbReference type="NCBI Taxonomy" id="561445"/>
    <lineage>
        <taxon>Viruses</taxon>
        <taxon>Varidnaviria</taxon>
        <taxon>Bamfordvirae</taxon>
        <taxon>Nucleocytoviricota</taxon>
        <taxon>Pokkesviricetes</taxon>
        <taxon>Asfuvirales</taxon>
        <taxon>Asfarviridae</taxon>
        <taxon>Asfivirus</taxon>
        <taxon>African swine fever virus</taxon>
    </lineage>
</organism>
<reference key="1">
    <citation type="submission" date="2003-03" db="EMBL/GenBank/DDBJ databases">
        <title>African swine fever virus genomes.</title>
        <authorList>
            <person name="Kutish G.F."/>
            <person name="Rock D.L."/>
        </authorList>
    </citation>
    <scope>NUCLEOTIDE SEQUENCE [LARGE SCALE GENOMIC DNA]</scope>
</reference>
<accession>P0C9W6</accession>
<comment type="subcellular location">
    <subcellularLocation>
        <location>Virion membrane</location>
        <topology>Single-pass membrane protein</topology>
    </subcellularLocation>
    <subcellularLocation>
        <location evidence="1">Host cell membrane</location>
        <topology evidence="1">Single-pass membrane protein</topology>
    </subcellularLocation>
</comment>
<comment type="induction">
    <text>Expressed in the early phase of the viral replicative cycle.</text>
</comment>
<comment type="similarity">
    <text evidence="3">Belongs to the asfivirus envelope protein p22 family.</text>
</comment>
<proteinExistence type="evidence at transcript level"/>
<evidence type="ECO:0000250" key="1"/>
<evidence type="ECO:0000255" key="2"/>
<evidence type="ECO:0000305" key="3"/>
<protein>
    <recommendedName>
        <fullName evidence="3">Putative membrane protein 165</fullName>
    </recommendedName>
</protein>
<organismHost>
    <name type="scientific">Ornithodoros</name>
    <name type="common">relapsing fever ticks</name>
    <dbReference type="NCBI Taxonomy" id="6937"/>
</organismHost>
<organismHost>
    <name type="scientific">Phacochoerus aethiopicus</name>
    <name type="common">Warthog</name>
    <dbReference type="NCBI Taxonomy" id="85517"/>
</organismHost>
<organismHost>
    <name type="scientific">Phacochoerus africanus</name>
    <name type="common">Warthog</name>
    <dbReference type="NCBI Taxonomy" id="41426"/>
</organismHost>
<organismHost>
    <name type="scientific">Potamochoerus larvatus</name>
    <name type="common">Bushpig</name>
    <dbReference type="NCBI Taxonomy" id="273792"/>
</organismHost>
<organismHost>
    <name type="scientific">Sus scrofa</name>
    <name type="common">Pig</name>
    <dbReference type="NCBI Taxonomy" id="9823"/>
</organismHost>
<sequence length="177" mass="20166">MYLVLLIAVILFIIVILMIFLISGLFYPEQEPALPISPPKKKCKTDTDCKDKGHHCVGGICTNMSCLDAIKYDIKDIKLDPNIRSCNYTPKFYKFSNTTADLQSPFGKTRIDDAELYDPHSGEDFCQRLCLDRKDCIGWEFDQYYAKTTGECYFYIDPHPALKSKNDAVLAIARKVS</sequence>
<feature type="chain" id="PRO_0000373370" description="Putative membrane protein 165">
    <location>
        <begin position="1"/>
        <end position="177"/>
    </location>
</feature>
<feature type="topological domain" description="Intravirion" evidence="2">
    <location>
        <begin position="1"/>
        <end position="7"/>
    </location>
</feature>
<feature type="transmembrane region" description="Helical" evidence="2">
    <location>
        <begin position="8"/>
        <end position="24"/>
    </location>
</feature>
<feature type="topological domain" description="Virion surface" evidence="2">
    <location>
        <begin position="25"/>
        <end position="166"/>
    </location>
</feature>
<name>EV165_ASFK5</name>